<gene>
    <name evidence="10" type="primary">GTL1</name>
    <name evidence="13" type="ordered locus">At1g33240</name>
    <name evidence="15" type="ORF">T16O9.10</name>
    <name evidence="14" type="ORF">T9L6.10</name>
</gene>
<reference key="1">
    <citation type="journal article" date="1998" name="Proc. Natl. Acad. Sci. U.S.A.">
        <title>The trihelix DNA-binding motif in higher plants is not restricted to the transcription factors GT-1 and GT-2.</title>
        <authorList>
            <person name="Smalle J.A.H."/>
            <person name="Kurepa J."/>
            <person name="Haegman M."/>
            <person name="Gielen J."/>
            <person name="Van Montagu M."/>
            <person name="Van Der Straeten D."/>
        </authorList>
    </citation>
    <scope>NUCLEOTIDE SEQUENCE [GENOMIC DNA]</scope>
    <scope>NUCLEOTIDE SEQUENCE [MRNA] OF 66-498 (ISOFORM 1)</scope>
    <scope>TISSUE SPECIFICITY</scope>
    <source>
        <strain>cv. Columbia</strain>
        <strain>cv. Landsberg erecta</strain>
    </source>
</reference>
<reference key="2">
    <citation type="journal article" date="2000" name="Nature">
        <title>Sequence and analysis of chromosome 1 of the plant Arabidopsis thaliana.</title>
        <authorList>
            <person name="Theologis A."/>
            <person name="Ecker J.R."/>
            <person name="Palm C.J."/>
            <person name="Federspiel N.A."/>
            <person name="Kaul S."/>
            <person name="White O."/>
            <person name="Alonso J."/>
            <person name="Altafi H."/>
            <person name="Araujo R."/>
            <person name="Bowman C.L."/>
            <person name="Brooks S.Y."/>
            <person name="Buehler E."/>
            <person name="Chan A."/>
            <person name="Chao Q."/>
            <person name="Chen H."/>
            <person name="Cheuk R.F."/>
            <person name="Chin C.W."/>
            <person name="Chung M.K."/>
            <person name="Conn L."/>
            <person name="Conway A.B."/>
            <person name="Conway A.R."/>
            <person name="Creasy T.H."/>
            <person name="Dewar K."/>
            <person name="Dunn P."/>
            <person name="Etgu P."/>
            <person name="Feldblyum T.V."/>
            <person name="Feng J.-D."/>
            <person name="Fong B."/>
            <person name="Fujii C.Y."/>
            <person name="Gill J.E."/>
            <person name="Goldsmith A.D."/>
            <person name="Haas B."/>
            <person name="Hansen N.F."/>
            <person name="Hughes B."/>
            <person name="Huizar L."/>
            <person name="Hunter J.L."/>
            <person name="Jenkins J."/>
            <person name="Johnson-Hopson C."/>
            <person name="Khan S."/>
            <person name="Khaykin E."/>
            <person name="Kim C.J."/>
            <person name="Koo H.L."/>
            <person name="Kremenetskaia I."/>
            <person name="Kurtz D.B."/>
            <person name="Kwan A."/>
            <person name="Lam B."/>
            <person name="Langin-Hooper S."/>
            <person name="Lee A."/>
            <person name="Lee J.M."/>
            <person name="Lenz C.A."/>
            <person name="Li J.H."/>
            <person name="Li Y.-P."/>
            <person name="Lin X."/>
            <person name="Liu S.X."/>
            <person name="Liu Z.A."/>
            <person name="Luros J.S."/>
            <person name="Maiti R."/>
            <person name="Marziali A."/>
            <person name="Militscher J."/>
            <person name="Miranda M."/>
            <person name="Nguyen M."/>
            <person name="Nierman W.C."/>
            <person name="Osborne B.I."/>
            <person name="Pai G."/>
            <person name="Peterson J."/>
            <person name="Pham P.K."/>
            <person name="Rizzo M."/>
            <person name="Rooney T."/>
            <person name="Rowley D."/>
            <person name="Sakano H."/>
            <person name="Salzberg S.L."/>
            <person name="Schwartz J.R."/>
            <person name="Shinn P."/>
            <person name="Southwick A.M."/>
            <person name="Sun H."/>
            <person name="Tallon L.J."/>
            <person name="Tambunga G."/>
            <person name="Toriumi M.J."/>
            <person name="Town C.D."/>
            <person name="Utterback T."/>
            <person name="Van Aken S."/>
            <person name="Vaysberg M."/>
            <person name="Vysotskaia V.S."/>
            <person name="Walker M."/>
            <person name="Wu D."/>
            <person name="Yu G."/>
            <person name="Fraser C.M."/>
            <person name="Venter J.C."/>
            <person name="Davis R.W."/>
        </authorList>
    </citation>
    <scope>NUCLEOTIDE SEQUENCE [LARGE SCALE GENOMIC DNA]</scope>
    <source>
        <strain>cv. Columbia</strain>
    </source>
</reference>
<reference key="3">
    <citation type="journal article" date="2017" name="Plant J.">
        <title>Araport11: a complete reannotation of the Arabidopsis thaliana reference genome.</title>
        <authorList>
            <person name="Cheng C.Y."/>
            <person name="Krishnakumar V."/>
            <person name="Chan A.P."/>
            <person name="Thibaud-Nissen F."/>
            <person name="Schobel S."/>
            <person name="Town C.D."/>
        </authorList>
    </citation>
    <scope>GENOME REANNOTATION</scope>
    <source>
        <strain>cv. Columbia</strain>
    </source>
</reference>
<reference key="4">
    <citation type="journal article" date="2003" name="Science">
        <title>Empirical analysis of transcriptional activity in the Arabidopsis genome.</title>
        <authorList>
            <person name="Yamada K."/>
            <person name="Lim J."/>
            <person name="Dale J.M."/>
            <person name="Chen H."/>
            <person name="Shinn P."/>
            <person name="Palm C.J."/>
            <person name="Southwick A.M."/>
            <person name="Wu H.C."/>
            <person name="Kim C.J."/>
            <person name="Nguyen M."/>
            <person name="Pham P.K."/>
            <person name="Cheuk R.F."/>
            <person name="Karlin-Newmann G."/>
            <person name="Liu S.X."/>
            <person name="Lam B."/>
            <person name="Sakano H."/>
            <person name="Wu T."/>
            <person name="Yu G."/>
            <person name="Miranda M."/>
            <person name="Quach H.L."/>
            <person name="Tripp M."/>
            <person name="Chang C.H."/>
            <person name="Lee J.M."/>
            <person name="Toriumi M.J."/>
            <person name="Chan M.M."/>
            <person name="Tang C.C."/>
            <person name="Onodera C.S."/>
            <person name="Deng J.M."/>
            <person name="Akiyama K."/>
            <person name="Ansari Y."/>
            <person name="Arakawa T."/>
            <person name="Banh J."/>
            <person name="Banno F."/>
            <person name="Bowser L."/>
            <person name="Brooks S.Y."/>
            <person name="Carninci P."/>
            <person name="Chao Q."/>
            <person name="Choy N."/>
            <person name="Enju A."/>
            <person name="Goldsmith A.D."/>
            <person name="Gurjal M."/>
            <person name="Hansen N.F."/>
            <person name="Hayashizaki Y."/>
            <person name="Johnson-Hopson C."/>
            <person name="Hsuan V.W."/>
            <person name="Iida K."/>
            <person name="Karnes M."/>
            <person name="Khan S."/>
            <person name="Koesema E."/>
            <person name="Ishida J."/>
            <person name="Jiang P.X."/>
            <person name="Jones T."/>
            <person name="Kawai J."/>
            <person name="Kamiya A."/>
            <person name="Meyers C."/>
            <person name="Nakajima M."/>
            <person name="Narusaka M."/>
            <person name="Seki M."/>
            <person name="Sakurai T."/>
            <person name="Satou M."/>
            <person name="Tamse R."/>
            <person name="Vaysberg M."/>
            <person name="Wallender E.K."/>
            <person name="Wong C."/>
            <person name="Yamamura Y."/>
            <person name="Yuan S."/>
            <person name="Shinozaki K."/>
            <person name="Davis R.W."/>
            <person name="Theologis A."/>
            <person name="Ecker J.R."/>
        </authorList>
    </citation>
    <scope>NUCLEOTIDE SEQUENCE [LARGE SCALE MRNA] (ISOFORM 2)</scope>
    <source>
        <strain>cv. Columbia</strain>
    </source>
</reference>
<reference key="5">
    <citation type="journal article" date="2009" name="Plant Cell">
        <title>The trihelix transcription factor GTL1 regulates ploidy-dependent cell growth in the Arabidopsis trichome.</title>
        <authorList>
            <person name="Breuer C."/>
            <person name="Kawamura A."/>
            <person name="Ichikawa T."/>
            <person name="Tominaga-Wada R."/>
            <person name="Wada T."/>
            <person name="Kondou Y."/>
            <person name="Muto S."/>
            <person name="Matsui M."/>
            <person name="Sugimoto K."/>
        </authorList>
    </citation>
    <scope>FUNCTION</scope>
    <scope>DISRUPTION PHENOTYPE</scope>
    <scope>SUBCELLULAR LOCATION</scope>
</reference>
<reference key="6">
    <citation type="journal article" date="2009" name="Plant Physiol.">
        <title>Large-scale Arabidopsis phosphoproteome profiling reveals novel chloroplast kinase substrates and phosphorylation networks.</title>
        <authorList>
            <person name="Reiland S."/>
            <person name="Messerli G."/>
            <person name="Baerenfaller K."/>
            <person name="Gerrits B."/>
            <person name="Endler A."/>
            <person name="Grossmann J."/>
            <person name="Gruissem W."/>
            <person name="Baginsky S."/>
        </authorList>
    </citation>
    <scope>PHOSPHORYLATION [LARGE SCALE ANALYSIS] AT SER-650 (ISOFORM 3)</scope>
    <scope>IDENTIFICATION BY MASS SPECTROMETRY [LARGE SCALE ANALYSIS]</scope>
</reference>
<reference key="7">
    <citation type="journal article" date="2010" name="Plant Cell">
        <title>The Arabidopsis GTL1 transcription factor regulates water use efficiency and drought tolerance by modulating stomatal density via transrepression of SDD1.</title>
        <authorList>
            <person name="Yoo C.Y."/>
            <person name="Pence H.E."/>
            <person name="Jin J.B."/>
            <person name="Miura K."/>
            <person name="Gosney M.J."/>
            <person name="Hasegawa P.M."/>
            <person name="Mickelbart M.V."/>
        </authorList>
    </citation>
    <scope>FUNCTION</scope>
    <scope>DISRUPTION PHENOTYPE</scope>
    <scope>TISSUE SPECIFICITY</scope>
    <scope>SUBCELLULAR LOCATION</scope>
    <scope>INDUCTION BY WATER STRESS</scope>
    <source>
        <strain>cv. Columbia</strain>
    </source>
</reference>
<reference key="8">
    <citation type="journal article" date="2018" name="Development">
        <title>GTL1 and DF1 regulate root hair growth through transcriptional repression of ROOT HAIR DEFECTIVE 6-LIKE 4 in Arabidopsis.</title>
        <authorList>
            <person name="Shibata M."/>
            <person name="Breuer C."/>
            <person name="Kawamura A."/>
            <person name="Clark N.M."/>
            <person name="Rymen B."/>
            <person name="Braidwood L."/>
            <person name="Morohashi K."/>
            <person name="Busch W."/>
            <person name="Benfey P.N."/>
            <person name="Sozzani R."/>
            <person name="Sugimoto K."/>
        </authorList>
    </citation>
    <scope>FUNCTION</scope>
    <scope>SUBCELLULAR LOCATION</scope>
    <scope>DISRUPTION PHENOTYPE</scope>
</reference>
<comment type="function">
    <text evidence="5 6 7">Transcription repressor that binds specific DNA sequence such as GT3 box 5'-GGTAAA-3' in the SDD1 promoter (PubMed:21169508). Negative regulator of water use efficiency (WUE) via the promotion of stomatal density and distribution by the transcription repression of SDD1 (PubMed:21169508). Regulates the expression of several cell cycle genes and endoreduplication, especially in trichomes where it prevents ploidy-dependent plant cell growth (PubMed:19717615). Regulates negatively root hair growth by directly binding RSL4 promoter and repressing RSL4 expression (PubMed:29439132).</text>
</comment>
<comment type="subcellular location">
    <subcellularLocation>
        <location evidence="5 6 7">Nucleus</location>
    </subcellularLocation>
    <text evidence="5">Present within the nucleus during the postbranching stages of trichome development.</text>
</comment>
<comment type="alternative products">
    <event type="alternative splicing"/>
    <isoform>
        <id>Q9C882-1</id>
        <name>1</name>
        <sequence type="displayed"/>
    </isoform>
    <isoform>
        <id>Q9C882-2</id>
        <name>2</name>
        <sequence type="described" ref="VSP_040713"/>
    </isoform>
    <isoform>
        <id>Q9C882-3</id>
        <name>3</name>
        <sequence type="described" ref="VSP_040714"/>
    </isoform>
    <text>A number of isoforms are produced. According to EST sequences.</text>
</comment>
<comment type="tissue specificity">
    <text evidence="6 8">Mostly expressed in siliques, and, to a lower extent, in growing root hairs, leaves, stems, and flowers (PubMed:9501260). Present in abaxial epidermal cells, predominantly in guard cells, pavement cells, and meristemoids (PubMed:21169508).</text>
</comment>
<comment type="induction">
    <text evidence="6">Down-regulated by water stress.</text>
</comment>
<comment type="disruption phenotype">
    <text evidence="5 6 7">Increased water deficit tolerance and higher integrated water use efficiency (WUE) by reducing daytime transpiration associated with a higher expression of SDD1 (PubMed:21169508). Increased trichome cell size with normal patterning and branching accompanied with an increase in the nuclear DNA content only in trichomes that have completed branching (PubMed:19717615). No visible phenotype under normal growth conditions, but the double mutant seedlings gtl1-1 and df1-1 exhibit increased root hair length (PubMed:29439132).</text>
</comment>
<comment type="miscellaneous">
    <text evidence="7">Plants overexpressing GTL1 fail to develop root hairs.</text>
</comment>
<comment type="sequence caution" evidence="12">
    <conflict type="erroneous gene model prediction">
        <sequence resource="EMBL-CDS" id="AAF97353"/>
    </conflict>
</comment>
<comment type="sequence caution" evidence="12">
    <conflict type="erroneous gene model prediction">
        <sequence resource="EMBL-CDS" id="AAG51283"/>
    </conflict>
</comment>
<comment type="sequence caution" evidence="12">
    <conflict type="erroneous gene model prediction">
        <sequence resource="EMBL-CDS" id="CAA05995"/>
    </conflict>
</comment>
<comment type="sequence caution" evidence="12">
    <conflict type="miscellaneous discrepancy">
        <sequence resource="EMBL-CDS" id="CAA05996"/>
    </conflict>
    <text>Probable cloning artifact.</text>
</comment>
<organism>
    <name type="scientific">Arabidopsis thaliana</name>
    <name type="common">Mouse-ear cress</name>
    <dbReference type="NCBI Taxonomy" id="3702"/>
    <lineage>
        <taxon>Eukaryota</taxon>
        <taxon>Viridiplantae</taxon>
        <taxon>Streptophyta</taxon>
        <taxon>Embryophyta</taxon>
        <taxon>Tracheophyta</taxon>
        <taxon>Spermatophyta</taxon>
        <taxon>Magnoliopsida</taxon>
        <taxon>eudicotyledons</taxon>
        <taxon>Gunneridae</taxon>
        <taxon>Pentapetalae</taxon>
        <taxon>rosids</taxon>
        <taxon>malvids</taxon>
        <taxon>Brassicales</taxon>
        <taxon>Brassicaceae</taxon>
        <taxon>Camelineae</taxon>
        <taxon>Arabidopsis</taxon>
    </lineage>
</organism>
<protein>
    <recommendedName>
        <fullName evidence="10">Trihelix transcription factor GTL1</fullName>
    </recommendedName>
    <alternativeName>
        <fullName evidence="11">GT2-LIKE protein 1</fullName>
        <shortName evidence="11">AtGTL1</shortName>
        <shortName evidence="10">Protein GT-2-LIKE1</shortName>
    </alternativeName>
    <alternativeName>
        <fullName evidence="12">Trihelix DNA-binding protein GTL1</fullName>
    </alternativeName>
</protein>
<sequence>MEQGGGGGGNEVVEEASPISSRPPANNLEELMRFSAAADDGGLGGGGGGGGGGSASSSSGNRWPREETLALLRIRSDMDSTFRDATLKAPLWEHVSRKLLELGYKRSSKKCKEKFENVQKYYKRTKETRGGRHDGKAYKFFSQLEALNTTPPSSSLDVTPLSVANPILMPSSSSSPFPVFSQPQPQTQTQPPQTHNVSFTPTPPPLPLPSMGPIFTGVTFSSHSSSTASGMGSDDDDDDMDVDQANIAGSSSRKRKRGNRGGGGKMMELFEGLVRQVMQKQAAMQRSFLEALEKREQERLDREEAWKRQEMARLAREHEVMSQERAASASRDAAIISLIQKITGHTIQLPPSLSSQPPPPYQPPPAVTKRVAEPPLSTAQSQSQQPIMAIPQQQILPPPPPSHPHAHQPEQKQQQQPQQEMVMSSEQSSLPSSSRWPKAEILALINLRSGMEPRYQDNVPKGLLWEEISTSMKRMGYNRNAKRCKEKWENINKYYKKVKESNKKRPQDAKTCPYFHRLDLLYRNKVLGSGGGSSTSGLPQDQKQSPVTAMKPPQEGLVNVQQTHGSASTEEEEPIEESPQGTEKKTL</sequence>
<evidence type="ECO:0000250" key="1"/>
<evidence type="ECO:0000255" key="2"/>
<evidence type="ECO:0000255" key="3">
    <source>
        <dbReference type="PROSITE-ProRule" id="PRU00133"/>
    </source>
</evidence>
<evidence type="ECO:0000256" key="4">
    <source>
        <dbReference type="SAM" id="MobiDB-lite"/>
    </source>
</evidence>
<evidence type="ECO:0000269" key="5">
    <source>
    </source>
</evidence>
<evidence type="ECO:0000269" key="6">
    <source>
    </source>
</evidence>
<evidence type="ECO:0000269" key="7">
    <source>
    </source>
</evidence>
<evidence type="ECO:0000269" key="8">
    <source>
    </source>
</evidence>
<evidence type="ECO:0000303" key="9">
    <source>
    </source>
</evidence>
<evidence type="ECO:0000303" key="10">
    <source>
    </source>
</evidence>
<evidence type="ECO:0000303" key="11">
    <source>
    </source>
</evidence>
<evidence type="ECO:0000305" key="12"/>
<evidence type="ECO:0000312" key="13">
    <source>
        <dbReference type="Araport" id="AT1G33240"/>
    </source>
</evidence>
<evidence type="ECO:0000312" key="14">
    <source>
        <dbReference type="EMBL" id="AAF97353.1"/>
    </source>
</evidence>
<evidence type="ECO:0000312" key="15">
    <source>
        <dbReference type="EMBL" id="AAG51283.1"/>
    </source>
</evidence>
<evidence type="ECO:0007744" key="16">
    <source>
    </source>
</evidence>
<feature type="chain" id="PRO_0000405798" description="Trihelix transcription factor GTL1">
    <location>
        <begin position="1"/>
        <end position="587"/>
    </location>
</feature>
<feature type="domain" description="Myb-like 1" evidence="3">
    <location>
        <begin position="55"/>
        <end position="119"/>
    </location>
</feature>
<feature type="domain" description="Myb-like 2" evidence="3">
    <location>
        <begin position="434"/>
        <end position="492"/>
    </location>
</feature>
<feature type="region of interest" description="Disordered" evidence="4">
    <location>
        <begin position="1"/>
        <end position="63"/>
    </location>
</feature>
<feature type="region of interest" description="Disordered" evidence="4">
    <location>
        <begin position="173"/>
        <end position="264"/>
    </location>
</feature>
<feature type="region of interest" description="Disordered" evidence="4">
    <location>
        <begin position="348"/>
        <end position="435"/>
    </location>
</feature>
<feature type="region of interest" description="Disordered" evidence="4">
    <location>
        <begin position="530"/>
        <end position="587"/>
    </location>
</feature>
<feature type="coiled-coil region" evidence="2">
    <location>
        <begin position="285"/>
        <end position="328"/>
    </location>
</feature>
<feature type="short sequence motif" description="Nuclear localization signal 1" evidence="1">
    <location>
        <begin position="96"/>
        <end position="103"/>
    </location>
</feature>
<feature type="short sequence motif" description="Nuclear localization signal 2" evidence="1">
    <location>
        <begin position="472"/>
        <end position="479"/>
    </location>
</feature>
<feature type="compositionally biased region" description="Gly residues" evidence="4">
    <location>
        <begin position="1"/>
        <end position="10"/>
    </location>
</feature>
<feature type="compositionally biased region" description="Gly residues" evidence="4">
    <location>
        <begin position="41"/>
        <end position="54"/>
    </location>
</feature>
<feature type="compositionally biased region" description="Low complexity" evidence="4">
    <location>
        <begin position="173"/>
        <end position="194"/>
    </location>
</feature>
<feature type="compositionally biased region" description="Pro residues" evidence="4">
    <location>
        <begin position="201"/>
        <end position="210"/>
    </location>
</feature>
<feature type="compositionally biased region" description="Low complexity" evidence="4">
    <location>
        <begin position="221"/>
        <end position="232"/>
    </location>
</feature>
<feature type="compositionally biased region" description="Acidic residues" evidence="4">
    <location>
        <begin position="233"/>
        <end position="242"/>
    </location>
</feature>
<feature type="compositionally biased region" description="Pro residues" evidence="4">
    <location>
        <begin position="356"/>
        <end position="366"/>
    </location>
</feature>
<feature type="compositionally biased region" description="Low complexity" evidence="4">
    <location>
        <begin position="379"/>
        <end position="395"/>
    </location>
</feature>
<feature type="compositionally biased region" description="Low complexity" evidence="4">
    <location>
        <begin position="411"/>
        <end position="434"/>
    </location>
</feature>
<feature type="compositionally biased region" description="Polar residues" evidence="4">
    <location>
        <begin position="538"/>
        <end position="547"/>
    </location>
</feature>
<feature type="compositionally biased region" description="Polar residues" evidence="4">
    <location>
        <begin position="559"/>
        <end position="568"/>
    </location>
</feature>
<feature type="splice variant" id="VSP_040713" description="In isoform 2." evidence="9">
    <location>
        <begin position="151"/>
        <end position="399"/>
    </location>
</feature>
<feature type="splice variant" id="VSP_040714" description="In isoform 3." evidence="12">
    <original>KTL</original>
    <variation>PEDLVMRELIQQQQQLQQQESMIGEYEKIEESHNYNNMEEEEDQEMDEEELDEDEKSAAFEIAFQSPANRGGNGHTEPPFLTMVQ</variation>
    <location>
        <begin position="585"/>
        <end position="587"/>
    </location>
</feature>
<feature type="sequence conflict" description="In Ref. 1; CAA05995/CAA05996/CAA05998." evidence="12" ref="1">
    <original>A</original>
    <variation>V</variation>
    <location>
        <position position="70"/>
    </location>
</feature>
<feature type="modified residue" description="Phosphoserine" evidence="16">
    <location sequence="Q9C882-3">
        <position position="650"/>
    </location>
</feature>
<name>GTL1_ARATH</name>
<dbReference type="EMBL" id="AJ003215">
    <property type="protein sequence ID" value="CAA05995.1"/>
    <property type="status" value="ALT_SEQ"/>
    <property type="molecule type" value="Genomic_DNA"/>
</dbReference>
<dbReference type="EMBL" id="AJ003216">
    <property type="protein sequence ID" value="CAA05996.1"/>
    <property type="status" value="ALT_SEQ"/>
    <property type="molecule type" value="Genomic_DNA"/>
</dbReference>
<dbReference type="EMBL" id="AJ003218">
    <property type="protein sequence ID" value="CAA05998.1"/>
    <property type="molecule type" value="mRNA"/>
</dbReference>
<dbReference type="EMBL" id="AC021045">
    <property type="protein sequence ID" value="AAF97353.1"/>
    <property type="status" value="ALT_SEQ"/>
    <property type="molecule type" value="Genomic_DNA"/>
</dbReference>
<dbReference type="EMBL" id="AC027035">
    <property type="protein sequence ID" value="AAG51283.1"/>
    <property type="status" value="ALT_SEQ"/>
    <property type="molecule type" value="Genomic_DNA"/>
</dbReference>
<dbReference type="EMBL" id="CP002684">
    <property type="protein sequence ID" value="AEE31573.1"/>
    <property type="molecule type" value="Genomic_DNA"/>
</dbReference>
<dbReference type="EMBL" id="AY140085">
    <property type="protein sequence ID" value="AAM98226.1"/>
    <property type="molecule type" value="mRNA"/>
</dbReference>
<dbReference type="EMBL" id="BT008824">
    <property type="protein sequence ID" value="AAP68263.1"/>
    <property type="molecule type" value="mRNA"/>
</dbReference>
<dbReference type="PIR" id="B86456">
    <property type="entry name" value="B86456"/>
</dbReference>
<dbReference type="RefSeq" id="NP_001322396.1">
    <property type="nucleotide sequence ID" value="NM_001333032.1"/>
</dbReference>
<dbReference type="RefSeq" id="NP_174594.1">
    <molecule id="Q9C882-3"/>
    <property type="nucleotide sequence ID" value="NM_103052.4"/>
</dbReference>
<dbReference type="SMR" id="Q9C882"/>
<dbReference type="BioGRID" id="25452">
    <property type="interactions" value="11"/>
</dbReference>
<dbReference type="FunCoup" id="Q9C882">
    <property type="interactions" value="49"/>
</dbReference>
<dbReference type="IntAct" id="Q9C882">
    <property type="interactions" value="9"/>
</dbReference>
<dbReference type="STRING" id="3702.Q9C882"/>
<dbReference type="GlyGen" id="Q9C882">
    <property type="glycosylation" value="1 site"/>
</dbReference>
<dbReference type="iPTMnet" id="Q9C882"/>
<dbReference type="PaxDb" id="3702-AT1G33240.1"/>
<dbReference type="PeptideAtlas" id="Q9C882"/>
<dbReference type="ProteomicsDB" id="247201">
    <molecule id="Q9C882-1"/>
</dbReference>
<dbReference type="EnsemblPlants" id="AT1G33240.1">
    <molecule id="Q9C882-3"/>
    <property type="protein sequence ID" value="AT1G33240.1"/>
    <property type="gene ID" value="AT1G33240"/>
</dbReference>
<dbReference type="GeneID" id="840218"/>
<dbReference type="Gramene" id="AT1G33240.1">
    <molecule id="Q9C882-3"/>
    <property type="protein sequence ID" value="AT1G33240.1"/>
    <property type="gene ID" value="AT1G33240"/>
</dbReference>
<dbReference type="KEGG" id="ath:AT1G33240"/>
<dbReference type="Araport" id="AT1G33240"/>
<dbReference type="TAIR" id="AT1G33240">
    <property type="gene designation" value="GTL1"/>
</dbReference>
<dbReference type="eggNOG" id="KOG4282">
    <property type="taxonomic scope" value="Eukaryota"/>
</dbReference>
<dbReference type="HOGENOM" id="CLU_013796_1_0_1"/>
<dbReference type="InParanoid" id="Q9C882"/>
<dbReference type="OMA" id="IWREPST"/>
<dbReference type="PhylomeDB" id="Q9C882"/>
<dbReference type="PRO" id="PR:Q9C882"/>
<dbReference type="Proteomes" id="UP000006548">
    <property type="component" value="Chromosome 1"/>
</dbReference>
<dbReference type="ExpressionAtlas" id="Q9C882">
    <property type="expression patterns" value="baseline and differential"/>
</dbReference>
<dbReference type="GO" id="GO:0005634">
    <property type="term" value="C:nucleus"/>
    <property type="evidence" value="ECO:0000314"/>
    <property type="project" value="UniProtKB"/>
</dbReference>
<dbReference type="GO" id="GO:0003677">
    <property type="term" value="F:DNA binding"/>
    <property type="evidence" value="ECO:0000314"/>
    <property type="project" value="UniProtKB"/>
</dbReference>
<dbReference type="GO" id="GO:0003700">
    <property type="term" value="F:DNA-binding transcription factor activity"/>
    <property type="evidence" value="ECO:0000250"/>
    <property type="project" value="TAIR"/>
</dbReference>
<dbReference type="GO" id="GO:0043565">
    <property type="term" value="F:sequence-specific DNA binding"/>
    <property type="evidence" value="ECO:0000314"/>
    <property type="project" value="TAIR"/>
</dbReference>
<dbReference type="GO" id="GO:0042631">
    <property type="term" value="P:cellular response to water deprivation"/>
    <property type="evidence" value="ECO:0000270"/>
    <property type="project" value="UniProtKB"/>
</dbReference>
<dbReference type="GO" id="GO:0006351">
    <property type="term" value="P:DNA-templated transcription"/>
    <property type="evidence" value="ECO:0000314"/>
    <property type="project" value="TAIR"/>
</dbReference>
<dbReference type="GO" id="GO:0030308">
    <property type="term" value="P:negative regulation of cell growth"/>
    <property type="evidence" value="ECO:0000315"/>
    <property type="project" value="TAIR"/>
</dbReference>
<dbReference type="GO" id="GO:0032876">
    <property type="term" value="P:negative regulation of DNA endoreduplication"/>
    <property type="evidence" value="ECO:0000315"/>
    <property type="project" value="TAIR"/>
</dbReference>
<dbReference type="GO" id="GO:0045892">
    <property type="term" value="P:negative regulation of DNA-templated transcription"/>
    <property type="evidence" value="ECO:0000314"/>
    <property type="project" value="UniProtKB"/>
</dbReference>
<dbReference type="GO" id="GO:0008361">
    <property type="term" value="P:regulation of cell size"/>
    <property type="evidence" value="ECO:0000315"/>
    <property type="project" value="TAIR"/>
</dbReference>
<dbReference type="GO" id="GO:2000038">
    <property type="term" value="P:regulation of stomatal complex development"/>
    <property type="evidence" value="ECO:0000315"/>
    <property type="project" value="TAIR"/>
</dbReference>
<dbReference type="GO" id="GO:2000037">
    <property type="term" value="P:regulation of stomatal complex patterning"/>
    <property type="evidence" value="ECO:0000315"/>
    <property type="project" value="UniProtKB"/>
</dbReference>
<dbReference type="GO" id="GO:0009414">
    <property type="term" value="P:response to water deprivation"/>
    <property type="evidence" value="ECO:0000315"/>
    <property type="project" value="TAIR"/>
</dbReference>
<dbReference type="GO" id="GO:0010090">
    <property type="term" value="P:trichome morphogenesis"/>
    <property type="evidence" value="ECO:0000315"/>
    <property type="project" value="TAIR"/>
</dbReference>
<dbReference type="CDD" id="cd12203">
    <property type="entry name" value="GT1"/>
    <property type="match status" value="2"/>
</dbReference>
<dbReference type="FunFam" id="1.10.10.60:FF:000061">
    <property type="entry name" value="Trihelix transcription factor GT-2"/>
    <property type="match status" value="1"/>
</dbReference>
<dbReference type="FunFam" id="1.10.10.60:FF:000092">
    <property type="entry name" value="Trihelix transcription factor GT-2"/>
    <property type="match status" value="1"/>
</dbReference>
<dbReference type="Gene3D" id="1.10.10.60">
    <property type="entry name" value="Homeodomain-like"/>
    <property type="match status" value="2"/>
</dbReference>
<dbReference type="InterPro" id="IPR044822">
    <property type="entry name" value="Myb_DNA-bind_4"/>
</dbReference>
<dbReference type="InterPro" id="IPR001005">
    <property type="entry name" value="SANT/Myb"/>
</dbReference>
<dbReference type="PANTHER" id="PTHR21654">
    <property type="entry name" value="FI21293P1"/>
    <property type="match status" value="1"/>
</dbReference>
<dbReference type="PANTHER" id="PTHR21654:SF84">
    <property type="entry name" value="SI:DKEY-66I24.7"/>
    <property type="match status" value="1"/>
</dbReference>
<dbReference type="Pfam" id="PF13837">
    <property type="entry name" value="Myb_DNA-bind_4"/>
    <property type="match status" value="2"/>
</dbReference>
<dbReference type="SMART" id="SM00717">
    <property type="entry name" value="SANT"/>
    <property type="match status" value="2"/>
</dbReference>
<dbReference type="PROSITE" id="PS50090">
    <property type="entry name" value="MYB_LIKE"/>
    <property type="match status" value="2"/>
</dbReference>
<keyword id="KW-0025">Alternative splicing</keyword>
<keyword id="KW-0175">Coiled coil</keyword>
<keyword id="KW-0238">DNA-binding</keyword>
<keyword id="KW-0539">Nucleus</keyword>
<keyword id="KW-0597">Phosphoprotein</keyword>
<keyword id="KW-1185">Reference proteome</keyword>
<keyword id="KW-0677">Repeat</keyword>
<keyword id="KW-0678">Repressor</keyword>
<keyword id="KW-0804">Transcription</keyword>
<keyword id="KW-0805">Transcription regulation</keyword>
<accession>Q9C882</accession>
<accession>O48590</accession>
<accession>O48591</accession>
<accession>Q7FPN7</accession>
<accession>Q8L6Y5</accession>
<accession>Q9LP25</accession>
<proteinExistence type="evidence at protein level"/>